<feature type="chain" id="PRO_0000215611" description="Sterol 3-beta-glucosyltransferase">
    <location>
        <begin position="1"/>
        <end position="1209"/>
    </location>
</feature>
<feature type="domain" description="GRAM 1" evidence="2">
    <location>
        <begin position="167"/>
        <end position="217"/>
    </location>
</feature>
<feature type="domain" description="PH" evidence="3">
    <location>
        <begin position="218"/>
        <end position="315"/>
    </location>
</feature>
<feature type="domain" description="GRAM 2" evidence="2">
    <location>
        <begin position="568"/>
        <end position="634"/>
    </location>
</feature>
<feature type="region of interest" description="Disordered" evidence="4">
    <location>
        <begin position="1186"/>
        <end position="1209"/>
    </location>
</feature>
<feature type="compositionally biased region" description="Low complexity" evidence="4">
    <location>
        <begin position="1196"/>
        <end position="1209"/>
    </location>
</feature>
<feature type="binding site" evidence="1">
    <location>
        <position position="745"/>
    </location>
    <ligand>
        <name>UDP-alpha-D-glucose</name>
        <dbReference type="ChEBI" id="CHEBI:58885"/>
    </ligand>
</feature>
<feature type="binding site" evidence="1">
    <location>
        <position position="746"/>
    </location>
    <ligand>
        <name>UDP-alpha-D-glucose</name>
        <dbReference type="ChEBI" id="CHEBI:58885"/>
    </ligand>
</feature>
<feature type="binding site" evidence="1">
    <location>
        <position position="748"/>
    </location>
    <ligand>
        <name>UDP-alpha-D-glucose</name>
        <dbReference type="ChEBI" id="CHEBI:58885"/>
    </ligand>
</feature>
<feature type="binding site" evidence="1">
    <location>
        <position position="1019"/>
    </location>
    <ligand>
        <name>UDP-alpha-D-glucose</name>
        <dbReference type="ChEBI" id="CHEBI:58885"/>
    </ligand>
</feature>
<feature type="binding site" evidence="1">
    <location>
        <position position="1048"/>
    </location>
    <ligand>
        <name>UDP-alpha-D-glucose</name>
        <dbReference type="ChEBI" id="CHEBI:58885"/>
    </ligand>
</feature>
<feature type="binding site" evidence="1">
    <location>
        <position position="1050"/>
    </location>
    <ligand>
        <name>UDP-alpha-D-glucose</name>
        <dbReference type="ChEBI" id="CHEBI:58885"/>
    </ligand>
</feature>
<feature type="binding site" evidence="1">
    <location>
        <position position="1063"/>
    </location>
    <ligand>
        <name>UDP-alpha-D-glucose</name>
        <dbReference type="ChEBI" id="CHEBI:58885"/>
    </ligand>
</feature>
<feature type="binding site" evidence="1">
    <location>
        <position position="1066"/>
    </location>
    <ligand>
        <name>UDP-alpha-D-glucose</name>
        <dbReference type="ChEBI" id="CHEBI:58885"/>
    </ligand>
</feature>
<feature type="binding site" evidence="1">
    <location>
        <position position="1067"/>
    </location>
    <ligand>
        <name>UDP-alpha-D-glucose</name>
        <dbReference type="ChEBI" id="CHEBI:58885"/>
    </ligand>
</feature>
<feature type="binding site" evidence="1">
    <location>
        <position position="1068"/>
    </location>
    <ligand>
        <name>UDP-alpha-D-glucose</name>
        <dbReference type="ChEBI" id="CHEBI:58885"/>
    </ligand>
</feature>
<feature type="binding site" evidence="1">
    <location>
        <position position="1087"/>
    </location>
    <ligand>
        <name>UDP-alpha-D-glucose</name>
        <dbReference type="ChEBI" id="CHEBI:58885"/>
    </ligand>
</feature>
<feature type="binding site" evidence="1">
    <location>
        <position position="1088"/>
    </location>
    <ligand>
        <name>UDP-alpha-D-glucose</name>
        <dbReference type="ChEBI" id="CHEBI:58885"/>
    </ligand>
</feature>
<dbReference type="EC" id="2.4.1.-" evidence="1"/>
<dbReference type="EC" id="2.4.1.173" evidence="1"/>
<dbReference type="EMBL" id="CR382123">
    <property type="protein sequence ID" value="CAH01138.1"/>
    <property type="molecule type" value="Genomic_DNA"/>
</dbReference>
<dbReference type="RefSeq" id="XP_452287.1">
    <property type="nucleotide sequence ID" value="XM_452287.1"/>
</dbReference>
<dbReference type="SMR" id="Q6CUV2"/>
<dbReference type="FunCoup" id="Q6CUV2">
    <property type="interactions" value="122"/>
</dbReference>
<dbReference type="STRING" id="284590.Q6CUV2"/>
<dbReference type="CAZy" id="GT1">
    <property type="family name" value="Glycosyltransferase Family 1"/>
</dbReference>
<dbReference type="PaxDb" id="284590-Q6CUV2"/>
<dbReference type="KEGG" id="kla:KLLA0_C02035g"/>
<dbReference type="eggNOG" id="KOG1192">
    <property type="taxonomic scope" value="Eukaryota"/>
</dbReference>
<dbReference type="HOGENOM" id="CLU_000537_6_0_1"/>
<dbReference type="InParanoid" id="Q6CUV2"/>
<dbReference type="OMA" id="WRNKTLG"/>
<dbReference type="BRENDA" id="2.4.1.173">
    <property type="organism ID" value="2825"/>
</dbReference>
<dbReference type="Proteomes" id="UP000000598">
    <property type="component" value="Chromosome C"/>
</dbReference>
<dbReference type="GO" id="GO:0005737">
    <property type="term" value="C:cytoplasm"/>
    <property type="evidence" value="ECO:0007669"/>
    <property type="project" value="UniProtKB-SubCell"/>
</dbReference>
<dbReference type="GO" id="GO:0016020">
    <property type="term" value="C:membrane"/>
    <property type="evidence" value="ECO:0007669"/>
    <property type="project" value="UniProtKB-SubCell"/>
</dbReference>
<dbReference type="GO" id="GO:0016906">
    <property type="term" value="F:sterol 3-beta-glucosyltransferase activity"/>
    <property type="evidence" value="ECO:0007669"/>
    <property type="project" value="UniProtKB-EC"/>
</dbReference>
<dbReference type="GO" id="GO:0005975">
    <property type="term" value="P:carbohydrate metabolic process"/>
    <property type="evidence" value="ECO:0007669"/>
    <property type="project" value="InterPro"/>
</dbReference>
<dbReference type="GO" id="GO:0030259">
    <property type="term" value="P:lipid glycosylation"/>
    <property type="evidence" value="ECO:0007669"/>
    <property type="project" value="InterPro"/>
</dbReference>
<dbReference type="GO" id="GO:0016126">
    <property type="term" value="P:sterol biosynthetic process"/>
    <property type="evidence" value="ECO:0007669"/>
    <property type="project" value="UniProtKB-KW"/>
</dbReference>
<dbReference type="CDD" id="cd03784">
    <property type="entry name" value="GT1_Gtf-like"/>
    <property type="match status" value="1"/>
</dbReference>
<dbReference type="CDD" id="cd13215">
    <property type="entry name" value="PH-GRAM1_AGT26"/>
    <property type="match status" value="1"/>
</dbReference>
<dbReference type="CDD" id="cd13216">
    <property type="entry name" value="PH-GRAM2_AGT26"/>
    <property type="match status" value="1"/>
</dbReference>
<dbReference type="FunFam" id="2.30.29.30:FF:000303">
    <property type="entry name" value="Sterol 3-beta-glucosyltransferase"/>
    <property type="match status" value="1"/>
</dbReference>
<dbReference type="FunFam" id="2.30.29.30:FF:000391">
    <property type="entry name" value="Sterol 3-beta-glucosyltransferase"/>
    <property type="match status" value="1"/>
</dbReference>
<dbReference type="FunFam" id="3.40.50.2000:FF:000029">
    <property type="entry name" value="Sterol 3-beta-glucosyltransferase"/>
    <property type="match status" value="1"/>
</dbReference>
<dbReference type="FunFam" id="3.40.50.2000:FF:000009">
    <property type="entry name" value="Sterol 3-beta-glucosyltransferase UGT80A2"/>
    <property type="match status" value="1"/>
</dbReference>
<dbReference type="Gene3D" id="3.40.50.2000">
    <property type="entry name" value="Glycogen Phosphorylase B"/>
    <property type="match status" value="2"/>
</dbReference>
<dbReference type="Gene3D" id="2.30.29.30">
    <property type="entry name" value="Pleckstrin-homology domain (PH domain)/Phosphotyrosine-binding domain (PTB)"/>
    <property type="match status" value="2"/>
</dbReference>
<dbReference type="InterPro" id="IPR048066">
    <property type="entry name" value="ATG26_PH_GRAM1"/>
</dbReference>
<dbReference type="InterPro" id="IPR048065">
    <property type="entry name" value="ATG26_PH_GRAM2"/>
</dbReference>
<dbReference type="InterPro" id="IPR010610">
    <property type="entry name" value="EryCIII-like_C"/>
</dbReference>
<dbReference type="InterPro" id="IPR050426">
    <property type="entry name" value="Glycosyltransferase_28"/>
</dbReference>
<dbReference type="InterPro" id="IPR004276">
    <property type="entry name" value="GlycoTrans_28_N"/>
</dbReference>
<dbReference type="InterPro" id="IPR004182">
    <property type="entry name" value="GRAM"/>
</dbReference>
<dbReference type="InterPro" id="IPR011993">
    <property type="entry name" value="PH-like_dom_sf"/>
</dbReference>
<dbReference type="InterPro" id="IPR001849">
    <property type="entry name" value="PH_domain"/>
</dbReference>
<dbReference type="InterPro" id="IPR002213">
    <property type="entry name" value="UDP_glucos_trans"/>
</dbReference>
<dbReference type="PANTHER" id="PTHR48050">
    <property type="entry name" value="STEROL 3-BETA-GLUCOSYLTRANSFERASE"/>
    <property type="match status" value="1"/>
</dbReference>
<dbReference type="PANTHER" id="PTHR48050:SF25">
    <property type="entry name" value="STEROL 3-BETA-GLUCOSYLTRANSFERASE"/>
    <property type="match status" value="1"/>
</dbReference>
<dbReference type="Pfam" id="PF06722">
    <property type="entry name" value="EryCIII-like_C"/>
    <property type="match status" value="1"/>
</dbReference>
<dbReference type="Pfam" id="PF03033">
    <property type="entry name" value="Glyco_transf_28"/>
    <property type="match status" value="1"/>
</dbReference>
<dbReference type="Pfam" id="PF02893">
    <property type="entry name" value="GRAM"/>
    <property type="match status" value="1"/>
</dbReference>
<dbReference type="Pfam" id="PF00169">
    <property type="entry name" value="PH"/>
    <property type="match status" value="1"/>
</dbReference>
<dbReference type="SMART" id="SM00568">
    <property type="entry name" value="GRAM"/>
    <property type="match status" value="2"/>
</dbReference>
<dbReference type="SMART" id="SM00233">
    <property type="entry name" value="PH"/>
    <property type="match status" value="1"/>
</dbReference>
<dbReference type="SUPFAM" id="SSF50729">
    <property type="entry name" value="PH domain-like"/>
    <property type="match status" value="1"/>
</dbReference>
<dbReference type="SUPFAM" id="SSF53756">
    <property type="entry name" value="UDP-Glycosyltransferase/glycogen phosphorylase"/>
    <property type="match status" value="1"/>
</dbReference>
<dbReference type="PROSITE" id="PS50003">
    <property type="entry name" value="PH_DOMAIN"/>
    <property type="match status" value="1"/>
</dbReference>
<proteinExistence type="inferred from homology"/>
<accession>Q6CUV2</accession>
<gene>
    <name evidence="1" type="primary">ATG26</name>
    <name type="ordered locus">KLLA0C02035g</name>
</gene>
<sequence>MPKDSSEHQKSPSRFTRSMFVDPRAFVRRSVSPVDQLCHSVADLRFVSSNTETLESRLQALSKKFDNGSENHGQDTDTVEDVAKTQYMAKSFAGLIATASMYVGINELGDKEENDEDELELMNDAASVLDTSSQANQTLFEVSIEMNADAISQISTDSKSRKELIRERLIKKFLPNDDEKYIEEYPCWLLRDIMIQGHAYLTNKHLFFFAFIPNFESDFNVTGSLRLISGHVLSKSHRYWVVLKGHTLSFHNSSTDLYFPLLTIDLRDISSVQMTSSENNPTKFELSIKDQSLVLKADSFHSARHWVSSIKKQMFASQHSDTNTMTIKIPLQNIVDLEETSILDKSGTLRIKALENLSTYAVDEYFFVFFKGNANAMKQKVNSLLKDLEMNGSQILVNFNKVDSPLGINEKLPDLNYDDPSNENNLVDDADINSAETDTLSPGTMQSALTLQQTSSAFSPRHSAYPRKVKKKLKSMAGSLKLGSPSKFTKLEDDIIIEHYSPGLINDQTIDYDKDSKSIISRLTPKKFQNVPLMWAADPVHFNSDDGIVFPLDDKYTADADISNQSNVRFRQHFSFDETANLVASYHGYLNRNVPIYGKIYISDKNICFRSLLPGVSTKTVLPLEDVENCYKETRFRFGYFGLVIVIHGHEELFLEFGNKNARDDCEFVMIKVMDAVSSHRSTLKRKSTAEVVHRLSEAASLKLLEEKISEQGFDIPLIVEKNPYFTTVIKPSKSYKFGLLTIGSRGDVQPYIALAKGLQAEGHEVIILTHGEFKDWIVSHNIGFREISGNPAELISLMVQHGSMNMGLLRDASTNFSTWISSLLDTAWEGCQGIDILIESPSAMAGIHIAEALRIPYFRAFTMPWTRTRAYPHAFIVPDQKRGGNYNYFTHVLFENIFWKGISGKVNEWRETKLKLPKTNLVSMQQNRVPFLYNVSPIVFPPSVDFNEWIKVTGYWFLDEKRSYKPPAEFMEFLNKARELKKKVVYIGFGSIVVNDPEKMTDTIIEAVRDAGVYCVLNKGWSNRFGDPLAKKIDKELPSYIYNSGDVPHDWLFTKIDATVHHGGSGTTGASLRAGLPTIIKPFFGDQFFYASRVEDIGAGVALKKLNRSSLAKALKEVTTNTRIIQKARQIGESISKEHGVATAIGAIYSELGYARSLIKTKNPVDDKEMEAASTKLSNDAVVTAKGNEKEEYSSEGSGSNDGSWLLI</sequence>
<name>ATG26_KLULA</name>
<keyword id="KW-0963">Cytoplasm</keyword>
<keyword id="KW-0328">Glycosyltransferase</keyword>
<keyword id="KW-0444">Lipid biosynthesis</keyword>
<keyword id="KW-0443">Lipid metabolism</keyword>
<keyword id="KW-0472">Membrane</keyword>
<keyword id="KW-1185">Reference proteome</keyword>
<keyword id="KW-0677">Repeat</keyword>
<keyword id="KW-0752">Steroid biosynthesis</keyword>
<keyword id="KW-0753">Steroid metabolism</keyword>
<keyword id="KW-0756">Sterol biosynthesis</keyword>
<keyword id="KW-1207">Sterol metabolism</keyword>
<keyword id="KW-0808">Transferase</keyword>
<protein>
    <recommendedName>
        <fullName evidence="5">Sterol 3-beta-glucosyltransferase</fullName>
        <ecNumber evidence="1">2.4.1.-</ecNumber>
        <ecNumber evidence="1">2.4.1.173</ecNumber>
    </recommendedName>
    <alternativeName>
        <fullName evidence="1">Autophagy-related protein 26</fullName>
    </alternativeName>
</protein>
<reference key="1">
    <citation type="journal article" date="2004" name="Nature">
        <title>Genome evolution in yeasts.</title>
        <authorList>
            <person name="Dujon B."/>
            <person name="Sherman D."/>
            <person name="Fischer G."/>
            <person name="Durrens P."/>
            <person name="Casaregola S."/>
            <person name="Lafontaine I."/>
            <person name="de Montigny J."/>
            <person name="Marck C."/>
            <person name="Neuveglise C."/>
            <person name="Talla E."/>
            <person name="Goffard N."/>
            <person name="Frangeul L."/>
            <person name="Aigle M."/>
            <person name="Anthouard V."/>
            <person name="Babour A."/>
            <person name="Barbe V."/>
            <person name="Barnay S."/>
            <person name="Blanchin S."/>
            <person name="Beckerich J.-M."/>
            <person name="Beyne E."/>
            <person name="Bleykasten C."/>
            <person name="Boisrame A."/>
            <person name="Boyer J."/>
            <person name="Cattolico L."/>
            <person name="Confanioleri F."/>
            <person name="de Daruvar A."/>
            <person name="Despons L."/>
            <person name="Fabre E."/>
            <person name="Fairhead C."/>
            <person name="Ferry-Dumazet H."/>
            <person name="Groppi A."/>
            <person name="Hantraye F."/>
            <person name="Hennequin C."/>
            <person name="Jauniaux N."/>
            <person name="Joyet P."/>
            <person name="Kachouri R."/>
            <person name="Kerrest A."/>
            <person name="Koszul R."/>
            <person name="Lemaire M."/>
            <person name="Lesur I."/>
            <person name="Ma L."/>
            <person name="Muller H."/>
            <person name="Nicaud J.-M."/>
            <person name="Nikolski M."/>
            <person name="Oztas S."/>
            <person name="Ozier-Kalogeropoulos O."/>
            <person name="Pellenz S."/>
            <person name="Potier S."/>
            <person name="Richard G.-F."/>
            <person name="Straub M.-L."/>
            <person name="Suleau A."/>
            <person name="Swennen D."/>
            <person name="Tekaia F."/>
            <person name="Wesolowski-Louvel M."/>
            <person name="Westhof E."/>
            <person name="Wirth B."/>
            <person name="Zeniou-Meyer M."/>
            <person name="Zivanovic Y."/>
            <person name="Bolotin-Fukuhara M."/>
            <person name="Thierry A."/>
            <person name="Bouchier C."/>
            <person name="Caudron B."/>
            <person name="Scarpelli C."/>
            <person name="Gaillardin C."/>
            <person name="Weissenbach J."/>
            <person name="Wincker P."/>
            <person name="Souciet J.-L."/>
        </authorList>
    </citation>
    <scope>NUCLEOTIDE SEQUENCE [LARGE SCALE GENOMIC DNA]</scope>
    <source>
        <strain>ATCC 8585 / CBS 2359 / DSM 70799 / NBRC 1267 / NRRL Y-1140 / WM37</strain>
    </source>
</reference>
<comment type="function">
    <text evidence="1">Sterol glycosyltransferase responsible for the glycosylation of ergosterol to form ergosterol-glucoside.</text>
</comment>
<comment type="catalytic activity">
    <reaction evidence="1">
        <text>a sterol + UDP-alpha-D-glucose = a sterol 3-beta-D-glucoside + UDP + H(+)</text>
        <dbReference type="Rhea" id="RHEA:22724"/>
        <dbReference type="ChEBI" id="CHEBI:15378"/>
        <dbReference type="ChEBI" id="CHEBI:15889"/>
        <dbReference type="ChEBI" id="CHEBI:37424"/>
        <dbReference type="ChEBI" id="CHEBI:58223"/>
        <dbReference type="ChEBI" id="CHEBI:58885"/>
        <dbReference type="EC" id="2.4.1.173"/>
    </reaction>
    <physiologicalReaction direction="left-to-right" evidence="1">
        <dbReference type="Rhea" id="RHEA:22725"/>
    </physiologicalReaction>
</comment>
<comment type="catalytic activity">
    <reaction evidence="1">
        <text>ergosterol + UDP-alpha-D-glucose = ergosteryl 3-beta-D-glucoside + UDP + H(+)</text>
        <dbReference type="Rhea" id="RHEA:61836"/>
        <dbReference type="ChEBI" id="CHEBI:15378"/>
        <dbReference type="ChEBI" id="CHEBI:16933"/>
        <dbReference type="ChEBI" id="CHEBI:52973"/>
        <dbReference type="ChEBI" id="CHEBI:58223"/>
        <dbReference type="ChEBI" id="CHEBI:58885"/>
    </reaction>
    <physiologicalReaction direction="left-to-right" evidence="1">
        <dbReference type="Rhea" id="RHEA:61837"/>
    </physiologicalReaction>
</comment>
<comment type="subcellular location">
    <subcellularLocation>
        <location evidence="1">Cytoplasm</location>
    </subcellularLocation>
    <subcellularLocation>
        <location evidence="1">Membrane</location>
        <topology evidence="1">Peripheral membrane protein</topology>
    </subcellularLocation>
</comment>
<comment type="similarity">
    <text evidence="5">Belongs to the glycosyltransferase 28 family.</text>
</comment>
<organism>
    <name type="scientific">Kluyveromyces lactis (strain ATCC 8585 / CBS 2359 / DSM 70799 / NBRC 1267 / NRRL Y-1140 / WM37)</name>
    <name type="common">Yeast</name>
    <name type="synonym">Candida sphaerica</name>
    <dbReference type="NCBI Taxonomy" id="284590"/>
    <lineage>
        <taxon>Eukaryota</taxon>
        <taxon>Fungi</taxon>
        <taxon>Dikarya</taxon>
        <taxon>Ascomycota</taxon>
        <taxon>Saccharomycotina</taxon>
        <taxon>Saccharomycetes</taxon>
        <taxon>Saccharomycetales</taxon>
        <taxon>Saccharomycetaceae</taxon>
        <taxon>Kluyveromyces</taxon>
    </lineage>
</organism>
<evidence type="ECO:0000250" key="1">
    <source>
        <dbReference type="UniProtKB" id="Q06321"/>
    </source>
</evidence>
<evidence type="ECO:0000255" key="2"/>
<evidence type="ECO:0000255" key="3">
    <source>
        <dbReference type="PROSITE-ProRule" id="PRU00145"/>
    </source>
</evidence>
<evidence type="ECO:0000256" key="4">
    <source>
        <dbReference type="SAM" id="MobiDB-lite"/>
    </source>
</evidence>
<evidence type="ECO:0000305" key="5"/>